<name>PAC_PECAS</name>
<gene>
    <name evidence="7" type="primary">pva</name>
    <name evidence="11" type="ordered locus">ECA3205</name>
</gene>
<protein>
    <recommendedName>
        <fullName evidence="6">Penicillin V acylase</fullName>
        <shortName evidence="6">PVA</shortName>
        <ecNumber evidence="3 4 5">3.5.1.11</ecNumber>
    </recommendedName>
    <alternativeName>
        <fullName evidence="6">PaPVA</fullName>
    </alternativeName>
    <alternativeName>
        <fullName evidence="8">Penicillin V amidase</fullName>
    </alternativeName>
    <alternativeName>
        <fullName evidence="8">Penicillin amidohydrolase</fullName>
    </alternativeName>
</protein>
<sequence>MIKNNKRIKSTVCALSLVALTLGSAVSLACTRFVYLDPHNPDYPITARSMDWADDTETNLWIFPQELKRSGGAGQYSLEWTSKYGSVIASAFDGRKGMASTTDGVNEKGLAANVLWLAESEYPKTKPTAKKPGLSVAAWAQYVLDNFATVDEAVKSLQQEKFILVTKQVEGQKRLATLHLSLSDSSGDSAIIEYIDGKQVIHHSKNYQVMTNSPTFDQQLTLNAYWDQIGGNVMLPGTNRAADRFVRASFYVKNVNPNKLIPGVAEKGKIEKDKADLATAFSIIRNASVPYGYSLPDMPNIASTRWRTVVDHKSLQYFFESAVSPNIFWVDLKKINFAPRGGSAAKLDLGPNQSTIYSGQASGHFKPAQPFEFAGL</sequence>
<accession>Q6D291</accession>
<comment type="function">
    <text evidence="3 4 5">Catalyzes the hydrolysis of penicillin V to 6-aminopenicillanate (6-APA) (PubMed:23850621, PubMed:25931393, PubMed:26707624). Shows high specificity towards penicillin V (PubMed:23850621). Can use other beta-lactam substrates, including penicillin G, ampicillin, cephalexin, cloxacillin and dicloxacillin, but at a rate less than 10% of that of penicillin V (PubMed:23850621). Does not show any activity with glyco- or tauro-conjugated bile salts (PubMed:23850621).</text>
</comment>
<comment type="catalytic activity">
    <reaction evidence="3 4 5">
        <text>a penicillin + H2O = 6-aminopenicillanate + a carboxylate</text>
        <dbReference type="Rhea" id="RHEA:18693"/>
        <dbReference type="ChEBI" id="CHEBI:15377"/>
        <dbReference type="ChEBI" id="CHEBI:29067"/>
        <dbReference type="ChEBI" id="CHEBI:51356"/>
        <dbReference type="ChEBI" id="CHEBI:57869"/>
        <dbReference type="EC" id="3.5.1.11"/>
    </reaction>
</comment>
<comment type="activity regulation">
    <text evidence="3 4">Exhibits uncharacteristic kinetic behavior, showing positive cooperativity coupled with substrate inhibition (PubMed:25931393). Penicillin acylase activity is enhanced in the presence of the reducing agent DTT, indicating active sulfhydryl group in the enzyme (PubMed:23850621, PubMed:25931393). Also shows enhanced activity in presence of organic solvents and detergents (PubMed:25931393). Inhibited largely in presence of Ag(+), Hg(2+) and Cd(2+) ions, which have strong affinities for sulfhydryl groups (PubMed:23850621, PubMed:25931393). Activity is also inhibited by bile salts (PubMed:23850621, PubMed:25931393).</text>
</comment>
<comment type="biophysicochemical properties">
    <phDependence>
        <text evidence="4">Optimum pH is 5 (PubMed:25931393). Shows a narrow pH spectrum (4-6) of activity and is most active in the acidic pH range (PubMed:25931393).</text>
    </phDependence>
    <temperatureDependence>
        <text evidence="4">Optimum temperature is 45 degrees Celsius (PubMed:25931393). Retains 87% of its original activity at 30 degrees Celsius and 50% of its activity at 50 degrees Celsius after 2 hours (PubMed:25931393). Shows significant loss of activity only at 80 degrees Celsius (PubMed:25931393).</text>
    </temperatureDependence>
</comment>
<comment type="subunit">
    <text evidence="4 5">Homotetramer (PubMed:25931393, PubMed:26707624). Dimer of dimers (PubMed:26707624).</text>
</comment>
<comment type="subcellular location">
    <subcellularLocation>
        <location evidence="9">Periplasm</location>
    </subcellularLocation>
</comment>
<comment type="biotechnology">
    <text evidence="4">PaPVA exhibits high recombinant protein yield, better pH and thermo-stability, and greater specific activity for penicillin V than other PVAs from Gram-positive bacteria, actinomycetes, fungi and yeast, suggesting that it could be a potential candidate for industrial production of 6-APA, a chemical compound used as an intermediate in the synthesis of beta-lactam antibiotics.</text>
</comment>
<comment type="similarity">
    <text evidence="8">Belongs to the peptidase C59 family.</text>
</comment>
<keyword id="KW-0002">3D-structure</keyword>
<keyword id="KW-0021">Allosteric enzyme</keyword>
<keyword id="KW-0046">Antibiotic resistance</keyword>
<keyword id="KW-0378">Hydrolase</keyword>
<keyword id="KW-0574">Periplasm</keyword>
<keyword id="KW-1185">Reference proteome</keyword>
<keyword id="KW-0732">Signal</keyword>
<feature type="signal peptide" evidence="1">
    <location>
        <begin position="1"/>
        <end position="29"/>
    </location>
</feature>
<feature type="chain" id="PRO_5004272351" description="Penicillin V acylase" evidence="2">
    <location>
        <begin position="30"/>
        <end position="376"/>
    </location>
</feature>
<feature type="active site" description="Nucleophile" evidence="10">
    <location>
        <position position="30"/>
    </location>
</feature>
<feature type="mutagenesis site" description="Loss of activity." evidence="5">
    <original>C</original>
    <variation>S</variation>
    <location>
        <position position="30"/>
    </location>
</feature>
<feature type="mutagenesis site" description="Retains 6% of wild-type activity." evidence="5">
    <original>R</original>
    <variation>H</variation>
    <location>
        <position position="48"/>
    </location>
</feature>
<feature type="mutagenesis site" description="Retains 10.9% of wild-type activity." evidence="5">
    <original>D</original>
    <variation>E</variation>
    <location>
        <position position="51"/>
    </location>
</feature>
<feature type="mutagenesis site" description="Retains 5.1% of wild-type activity." evidence="5">
    <original>D</original>
    <variation>N</variation>
    <location>
        <position position="51"/>
    </location>
</feature>
<feature type="mutagenesis site" description="Retains 4% of wild-type activity. Retains 0.13% of wild-type activity; when associated with Y-116." evidence="5">
    <original>W</original>
    <variation>F</variation>
    <location>
        <position position="52"/>
    </location>
</feature>
<feature type="mutagenesis site" description="Retains 0.9% of wild-type activity. Retains 0.02% of wild-type activity; when associated with N-116." evidence="5">
    <original>W</original>
    <variation>I</variation>
    <location>
        <position position="52"/>
    </location>
</feature>
<feature type="mutagenesis site" description="Retains 81.2% of wild-type activity. Retains 0.02% of wild-type activity; when associated with I-52." evidence="5">
    <original>W</original>
    <variation>N</variation>
    <location>
        <position position="116"/>
    </location>
</feature>
<feature type="mutagenesis site" description="Retains 1.5% of wild-type activity. Retains 0.13% of wild-type activity; when associated with F-52." evidence="5">
    <original>W</original>
    <variation>Y</variation>
    <location>
        <position position="116"/>
    </location>
</feature>
<feature type="mutagenesis site" description="Retains 7.4% of wild-type activity." evidence="5">
    <original>R</original>
    <variation>L</variation>
    <location>
        <position position="244"/>
    </location>
</feature>
<feature type="strand" evidence="13">
    <location>
        <begin position="31"/>
        <end position="35"/>
    </location>
</feature>
<feature type="strand" evidence="13">
    <location>
        <begin position="45"/>
        <end position="51"/>
    </location>
</feature>
<feature type="strand" evidence="13">
    <location>
        <begin position="60"/>
        <end position="63"/>
    </location>
</feature>
<feature type="strand" evidence="13">
    <location>
        <begin position="68"/>
        <end position="70"/>
    </location>
</feature>
<feature type="strand" evidence="13">
    <location>
        <begin position="73"/>
        <end position="77"/>
    </location>
</feature>
<feature type="strand" evidence="13">
    <location>
        <begin position="79"/>
        <end position="81"/>
    </location>
</feature>
<feature type="strand" evidence="13">
    <location>
        <begin position="86"/>
        <end position="92"/>
    </location>
</feature>
<feature type="turn" evidence="13">
    <location>
        <begin position="96"/>
        <end position="98"/>
    </location>
</feature>
<feature type="strand" evidence="13">
    <location>
        <begin position="100"/>
        <end position="106"/>
    </location>
</feature>
<feature type="strand" evidence="13">
    <location>
        <begin position="111"/>
        <end position="117"/>
    </location>
</feature>
<feature type="strand" evidence="13">
    <location>
        <begin position="129"/>
        <end position="131"/>
    </location>
</feature>
<feature type="strand" evidence="13">
    <location>
        <begin position="133"/>
        <end position="135"/>
    </location>
</feature>
<feature type="helix" evidence="13">
    <location>
        <begin position="136"/>
        <end position="138"/>
    </location>
</feature>
<feature type="helix" evidence="13">
    <location>
        <begin position="139"/>
        <end position="146"/>
    </location>
</feature>
<feature type="helix" evidence="13">
    <location>
        <begin position="150"/>
        <end position="158"/>
    </location>
</feature>
<feature type="strand" evidence="13">
    <location>
        <begin position="162"/>
        <end position="165"/>
    </location>
</feature>
<feature type="strand" evidence="13">
    <location>
        <begin position="171"/>
        <end position="173"/>
    </location>
</feature>
<feature type="strand" evidence="13">
    <location>
        <begin position="178"/>
        <end position="183"/>
    </location>
</feature>
<feature type="strand" evidence="13">
    <location>
        <begin position="189"/>
        <end position="195"/>
    </location>
</feature>
<feature type="strand" evidence="13">
    <location>
        <begin position="198"/>
        <end position="203"/>
    </location>
</feature>
<feature type="strand" evidence="13">
    <location>
        <begin position="209"/>
        <end position="214"/>
    </location>
</feature>
<feature type="helix" evidence="13">
    <location>
        <begin position="216"/>
        <end position="219"/>
    </location>
</feature>
<feature type="turn" evidence="13">
    <location>
        <begin position="220"/>
        <end position="223"/>
    </location>
</feature>
<feature type="helix" evidence="13">
    <location>
        <begin position="224"/>
        <end position="228"/>
    </location>
</feature>
<feature type="turn" evidence="13">
    <location>
        <begin position="231"/>
        <end position="233"/>
    </location>
</feature>
<feature type="helix" evidence="13">
    <location>
        <begin position="241"/>
        <end position="254"/>
    </location>
</feature>
<feature type="helix" evidence="13">
    <location>
        <begin position="269"/>
        <end position="286"/>
    </location>
</feature>
<feature type="strand" evidence="13">
    <location>
        <begin position="304"/>
        <end position="311"/>
    </location>
</feature>
<feature type="turn" evidence="13">
    <location>
        <begin position="312"/>
        <end position="315"/>
    </location>
</feature>
<feature type="strand" evidence="13">
    <location>
        <begin position="316"/>
        <end position="325"/>
    </location>
</feature>
<feature type="strand" evidence="13">
    <location>
        <begin position="327"/>
        <end position="331"/>
    </location>
</feature>
<feature type="helix" evidence="13">
    <location>
        <begin position="332"/>
        <end position="334"/>
    </location>
</feature>
<feature type="strand" evidence="13">
    <location>
        <begin position="344"/>
        <end position="347"/>
    </location>
</feature>
<feature type="helix" evidence="13">
    <location>
        <begin position="351"/>
        <end position="353"/>
    </location>
</feature>
<feature type="helix" evidence="13">
    <location>
        <begin position="362"/>
        <end position="364"/>
    </location>
</feature>
<feature type="strand" evidence="13">
    <location>
        <begin position="366"/>
        <end position="368"/>
    </location>
</feature>
<evidence type="ECO:0000255" key="1"/>
<evidence type="ECO:0000255" key="2">
    <source>
        <dbReference type="PROSITE-ProRule" id="PRU00303"/>
    </source>
</evidence>
<evidence type="ECO:0000269" key="3">
    <source>
    </source>
</evidence>
<evidence type="ECO:0000269" key="4">
    <source>
    </source>
</evidence>
<evidence type="ECO:0000269" key="5">
    <source>
    </source>
</evidence>
<evidence type="ECO:0000303" key="6">
    <source>
    </source>
</evidence>
<evidence type="ECO:0000303" key="7">
    <source>
    </source>
</evidence>
<evidence type="ECO:0000305" key="8"/>
<evidence type="ECO:0000305" key="9">
    <source>
    </source>
</evidence>
<evidence type="ECO:0000305" key="10">
    <source>
    </source>
</evidence>
<evidence type="ECO:0000312" key="11">
    <source>
        <dbReference type="EMBL" id="CAG76103.1"/>
    </source>
</evidence>
<evidence type="ECO:0007744" key="12">
    <source>
        <dbReference type="PDB" id="4WL2"/>
    </source>
</evidence>
<evidence type="ECO:0007829" key="13">
    <source>
        <dbReference type="PDB" id="4WL2"/>
    </source>
</evidence>
<proteinExistence type="evidence at protein level"/>
<reference key="1">
    <citation type="journal article" date="2004" name="Proc. Natl. Acad. Sci. U.S.A.">
        <title>Genome sequence of the enterobacterial phytopathogen Erwinia carotovora subsp. atroseptica and characterization of virulence factors.</title>
        <authorList>
            <person name="Bell K.S."/>
            <person name="Sebaihia M."/>
            <person name="Pritchard L."/>
            <person name="Holden M.T.G."/>
            <person name="Hyman L.J."/>
            <person name="Holeva M.C."/>
            <person name="Thomson N.R."/>
            <person name="Bentley S.D."/>
            <person name="Churcher L.J.C."/>
            <person name="Mungall K."/>
            <person name="Atkin R."/>
            <person name="Bason N."/>
            <person name="Brooks K."/>
            <person name="Chillingworth T."/>
            <person name="Clark K."/>
            <person name="Doggett J."/>
            <person name="Fraser A."/>
            <person name="Hance Z."/>
            <person name="Hauser H."/>
            <person name="Jagels K."/>
            <person name="Moule S."/>
            <person name="Norbertczak H."/>
            <person name="Ormond D."/>
            <person name="Price C."/>
            <person name="Quail M.A."/>
            <person name="Sanders M."/>
            <person name="Walker D."/>
            <person name="Whitehead S."/>
            <person name="Salmond G.P.C."/>
            <person name="Birch P.R.J."/>
            <person name="Parkhill J."/>
            <person name="Toth I.K."/>
        </authorList>
    </citation>
    <scope>NUCLEOTIDE SEQUENCE [LARGE SCALE GENOMIC DNA]</scope>
    <source>
        <strain>SCRI 1043 / ATCC BAA-672</strain>
    </source>
</reference>
<reference key="2">
    <citation type="journal article" date="2013" name="Biochem. Biophys. Res. Commun.">
        <title>Structural modelling of substrate binding and inhibition in penicillin V acylase from Pectobacterium atrosepticum.</title>
        <authorList>
            <person name="Avinash V.S."/>
            <person name="Panigrahi P."/>
            <person name="Suresh C.G."/>
            <person name="Pundle A.V."/>
            <person name="Ramasamy S."/>
        </authorList>
    </citation>
    <scope>FUNCTION</scope>
    <scope>CATALYTIC ACTIVITY</scope>
    <scope>ACTIVITY REGULATION</scope>
    <source>
        <strain>DSM 30186</strain>
    </source>
</reference>
<reference key="3">
    <citation type="journal article" date="2015" name="Int. J. Biol. Macromol.">
        <title>Penicillin V acylase from Pectobacterium atrosepticum exhibits high specific activity and unique kinetics.</title>
        <authorList>
            <person name="Avinash V.S."/>
            <person name="Ramasamy S."/>
            <person name="Suresh C.G."/>
            <person name="Pundle A."/>
        </authorList>
    </citation>
    <scope>FUNCTION</scope>
    <scope>CATALYTIC ACTIVITY</scope>
    <scope>ACTIVITY REGULATION</scope>
    <scope>BIOPHYSICOCHEMICAL PROPERTIES</scope>
    <scope>SUBUNIT</scope>
    <scope>BIOTECHNOLOGY</scope>
</reference>
<reference evidence="12" key="4">
    <citation type="journal article" date="2016" name="J. Struct. Biol.">
        <title>Structural analysis of a penicillin V acylase from Pectobacterium atrosepticum confirms the importance of two Trp residues for activity and specificity.</title>
        <authorList>
            <person name="Avinash V.S."/>
            <person name="Panigrahi P."/>
            <person name="Chand D."/>
            <person name="Pundle A."/>
            <person name="Suresh C.G."/>
            <person name="Ramasamy S."/>
        </authorList>
    </citation>
    <scope>X-RAY CRYSTALLOGRAPHY (2.50 ANGSTROMS) OF 30-376</scope>
    <scope>FUNCTION</scope>
    <scope>CATALYTIC ACTIVITY</scope>
    <scope>SUBUNIT</scope>
    <scope>MUTAGENESIS OF CYS-30; ARG-48; ASP-51; TRP-52; TRP-116 AND ARG-244</scope>
    <scope>ACTIVE SITE</scope>
    <scope>MOLECULAR DYNAMICS SIMULATIONS</scope>
</reference>
<organism>
    <name type="scientific">Pectobacterium atrosepticum (strain SCRI 1043 / ATCC BAA-672)</name>
    <name type="common">Erwinia carotovora subsp. atroseptica</name>
    <dbReference type="NCBI Taxonomy" id="218491"/>
    <lineage>
        <taxon>Bacteria</taxon>
        <taxon>Pseudomonadati</taxon>
        <taxon>Pseudomonadota</taxon>
        <taxon>Gammaproteobacteria</taxon>
        <taxon>Enterobacterales</taxon>
        <taxon>Pectobacteriaceae</taxon>
        <taxon>Pectobacterium</taxon>
    </lineage>
</organism>
<dbReference type="EC" id="3.5.1.11" evidence="3 4 5"/>
<dbReference type="EMBL" id="BX950851">
    <property type="protein sequence ID" value="CAG76103.1"/>
    <property type="molecule type" value="Genomic_DNA"/>
</dbReference>
<dbReference type="RefSeq" id="WP_011094726.1">
    <property type="nucleotide sequence ID" value="NC_004547.2"/>
</dbReference>
<dbReference type="PDB" id="4WL2">
    <property type="method" value="X-ray"/>
    <property type="resolution" value="2.50 A"/>
    <property type="chains" value="A/B/C/D/E/F/G/H=30-376"/>
</dbReference>
<dbReference type="PDBsum" id="4WL2"/>
<dbReference type="SMR" id="Q6D291"/>
<dbReference type="KEGG" id="eca:ECA3205"/>
<dbReference type="PATRIC" id="fig|218491.5.peg.3247"/>
<dbReference type="eggNOG" id="COG3049">
    <property type="taxonomic scope" value="Bacteria"/>
</dbReference>
<dbReference type="HOGENOM" id="CLU_045206_0_1_6"/>
<dbReference type="OrthoDB" id="1265391at2"/>
<dbReference type="BRENDA" id="3.5.1.11">
    <property type="organism ID" value="9330"/>
</dbReference>
<dbReference type="EvolutionaryTrace" id="Q6D291"/>
<dbReference type="Proteomes" id="UP000007966">
    <property type="component" value="Chromosome"/>
</dbReference>
<dbReference type="GO" id="GO:0042597">
    <property type="term" value="C:periplasmic space"/>
    <property type="evidence" value="ECO:0007669"/>
    <property type="project" value="UniProtKB-SubCell"/>
</dbReference>
<dbReference type="GO" id="GO:0016787">
    <property type="term" value="F:hydrolase activity"/>
    <property type="evidence" value="ECO:0007669"/>
    <property type="project" value="UniProtKB-KW"/>
</dbReference>
<dbReference type="GO" id="GO:0046677">
    <property type="term" value="P:response to antibiotic"/>
    <property type="evidence" value="ECO:0007669"/>
    <property type="project" value="UniProtKB-KW"/>
</dbReference>
<dbReference type="CDD" id="cd01902">
    <property type="entry name" value="Ntn_CGH"/>
    <property type="match status" value="1"/>
</dbReference>
<dbReference type="Gene3D" id="3.60.60.10">
    <property type="entry name" value="Penicillin V Acylase, Chain A"/>
    <property type="match status" value="1"/>
</dbReference>
<dbReference type="InterPro" id="IPR029132">
    <property type="entry name" value="CBAH/NAAA_C"/>
</dbReference>
<dbReference type="InterPro" id="IPR029055">
    <property type="entry name" value="Ntn_hydrolases_N"/>
</dbReference>
<dbReference type="InterPro" id="IPR052193">
    <property type="entry name" value="Peptidase_C59"/>
</dbReference>
<dbReference type="PANTHER" id="PTHR35527">
    <property type="entry name" value="CHOLOYLGLYCINE HYDROLASE"/>
    <property type="match status" value="1"/>
</dbReference>
<dbReference type="PANTHER" id="PTHR35527:SF2">
    <property type="entry name" value="HYDROLASE"/>
    <property type="match status" value="1"/>
</dbReference>
<dbReference type="Pfam" id="PF02275">
    <property type="entry name" value="CBAH"/>
    <property type="match status" value="1"/>
</dbReference>
<dbReference type="SUPFAM" id="SSF56235">
    <property type="entry name" value="N-terminal nucleophile aminohydrolases (Ntn hydrolases)"/>
    <property type="match status" value="1"/>
</dbReference>